<dbReference type="EC" id="3.2.1.17"/>
<dbReference type="EMBL" id="U76915">
    <property type="protein sequence ID" value="AAB41206.1"/>
    <property type="molecule type" value="mRNA"/>
</dbReference>
<dbReference type="BMRB" id="P79180"/>
<dbReference type="SMR" id="P79180"/>
<dbReference type="CAZy" id="GH22">
    <property type="family name" value="Glycoside Hydrolase Family 22"/>
</dbReference>
<dbReference type="GO" id="GO:0005576">
    <property type="term" value="C:extracellular region"/>
    <property type="evidence" value="ECO:0007669"/>
    <property type="project" value="UniProtKB-SubCell"/>
</dbReference>
<dbReference type="GO" id="GO:0003796">
    <property type="term" value="F:lysozyme activity"/>
    <property type="evidence" value="ECO:0007669"/>
    <property type="project" value="UniProtKB-EC"/>
</dbReference>
<dbReference type="GO" id="GO:0050829">
    <property type="term" value="P:defense response to Gram-negative bacterium"/>
    <property type="evidence" value="ECO:0007669"/>
    <property type="project" value="TreeGrafter"/>
</dbReference>
<dbReference type="GO" id="GO:0050830">
    <property type="term" value="P:defense response to Gram-positive bacterium"/>
    <property type="evidence" value="ECO:0007669"/>
    <property type="project" value="TreeGrafter"/>
</dbReference>
<dbReference type="GO" id="GO:0031640">
    <property type="term" value="P:killing of cells of another organism"/>
    <property type="evidence" value="ECO:0007669"/>
    <property type="project" value="UniProtKB-KW"/>
</dbReference>
<dbReference type="CDD" id="cd16897">
    <property type="entry name" value="LYZ_C"/>
    <property type="match status" value="1"/>
</dbReference>
<dbReference type="FunFam" id="1.10.530.10:FF:000001">
    <property type="entry name" value="Lysozyme C"/>
    <property type="match status" value="1"/>
</dbReference>
<dbReference type="Gene3D" id="1.10.530.10">
    <property type="match status" value="1"/>
</dbReference>
<dbReference type="InterPro" id="IPR001916">
    <property type="entry name" value="Glyco_hydro_22"/>
</dbReference>
<dbReference type="InterPro" id="IPR019799">
    <property type="entry name" value="Glyco_hydro_22_CS"/>
</dbReference>
<dbReference type="InterPro" id="IPR000974">
    <property type="entry name" value="Glyco_hydro_22_lys"/>
</dbReference>
<dbReference type="InterPro" id="IPR023346">
    <property type="entry name" value="Lysozyme-like_dom_sf"/>
</dbReference>
<dbReference type="PANTHER" id="PTHR11407">
    <property type="entry name" value="LYSOZYME C"/>
    <property type="match status" value="1"/>
</dbReference>
<dbReference type="PANTHER" id="PTHR11407:SF28">
    <property type="entry name" value="LYSOZYME C"/>
    <property type="match status" value="1"/>
</dbReference>
<dbReference type="Pfam" id="PF00062">
    <property type="entry name" value="Lys"/>
    <property type="match status" value="1"/>
</dbReference>
<dbReference type="PRINTS" id="PR00137">
    <property type="entry name" value="LYSOZYME"/>
</dbReference>
<dbReference type="PRINTS" id="PR00135">
    <property type="entry name" value="LYZLACT"/>
</dbReference>
<dbReference type="SMART" id="SM00263">
    <property type="entry name" value="LYZ1"/>
    <property type="match status" value="1"/>
</dbReference>
<dbReference type="SUPFAM" id="SSF53955">
    <property type="entry name" value="Lysozyme-like"/>
    <property type="match status" value="1"/>
</dbReference>
<dbReference type="PROSITE" id="PS00128">
    <property type="entry name" value="GLYCOSYL_HYDROL_F22_1"/>
    <property type="match status" value="1"/>
</dbReference>
<dbReference type="PROSITE" id="PS51348">
    <property type="entry name" value="GLYCOSYL_HYDROL_F22_2"/>
    <property type="match status" value="1"/>
</dbReference>
<accession>P79180</accession>
<protein>
    <recommendedName>
        <fullName>Lysozyme C</fullName>
        <ecNumber>3.2.1.17</ecNumber>
    </recommendedName>
    <alternativeName>
        <fullName>1,4-beta-N-acetylmuramidase C</fullName>
    </alternativeName>
</protein>
<comment type="function">
    <text>Lysozymes have primarily a bacteriolytic function; those in tissues and body fluids are associated with the monocyte-macrophage system and enhance the activity of immunoagents.</text>
</comment>
<comment type="catalytic activity">
    <reaction>
        <text>Hydrolysis of (1-&gt;4)-beta-linkages between N-acetylmuramic acid and N-acetyl-D-glucosamine residues in a peptidoglycan and between N-acetyl-D-glucosamine residues in chitodextrins.</text>
        <dbReference type="EC" id="3.2.1.17"/>
    </reaction>
</comment>
<comment type="subunit">
    <text>Monomer.</text>
</comment>
<comment type="subcellular location">
    <subcellularLocation>
        <location evidence="1">Secreted</location>
    </subcellularLocation>
</comment>
<comment type="miscellaneous">
    <text>Lysozyme C is capable of both hydrolysis and transglycosylation; it also shows a slight esterase activity. It acts rapidly on both peptide-substituted and unsubstituted peptidoglycan, and slowly on chitin oligosaccharides.</text>
</comment>
<comment type="similarity">
    <text evidence="2">Belongs to the glycosyl hydrolase 22 family.</text>
</comment>
<reference key="1">
    <citation type="journal article" date="1997" name="Nature">
        <title>Episodic adaptive evolution of primate lysozymes.</title>
        <authorList>
            <person name="Messier W."/>
            <person name="Stewart C.B."/>
        </authorList>
    </citation>
    <scope>NUCLEOTIDE SEQUENCE [MRNA]</scope>
    <source>
        <tissue>Blood</tissue>
    </source>
</reference>
<name>LYSC_HYLLA</name>
<keyword id="KW-0929">Antimicrobial</keyword>
<keyword id="KW-0081">Bacteriolytic enzyme</keyword>
<keyword id="KW-1015">Disulfide bond</keyword>
<keyword id="KW-0326">Glycosidase</keyword>
<keyword id="KW-0378">Hydrolase</keyword>
<keyword id="KW-0964">Secreted</keyword>
<keyword id="KW-0732">Signal</keyword>
<evidence type="ECO:0000250" key="1"/>
<evidence type="ECO:0000255" key="2">
    <source>
        <dbReference type="PROSITE-ProRule" id="PRU00680"/>
    </source>
</evidence>
<sequence length="148" mass="16676">MKALIILGLVLLSVMVQAKVFERCELARTLKRLGMDGYRGISLANWMCLAKWESGYNTRATNYNPGDRSTDYGIFQINSRYWCNDGKTPGAVNACHLSCNALLQDNIADAVACAKRVVRDPQGIRAWVAWRNRCQNRDLRQYIQGCGV</sequence>
<proteinExistence type="evidence at transcript level"/>
<feature type="signal peptide" evidence="1">
    <location>
        <begin position="1"/>
        <end position="18"/>
    </location>
</feature>
<feature type="chain" id="PRO_0000018468" description="Lysozyme C">
    <location>
        <begin position="19"/>
        <end position="148"/>
    </location>
</feature>
<feature type="domain" description="C-type lysozyme" evidence="2">
    <location>
        <begin position="19"/>
        <end position="148"/>
    </location>
</feature>
<feature type="active site" evidence="2">
    <location>
        <position position="53"/>
    </location>
</feature>
<feature type="active site" evidence="2">
    <location>
        <position position="71"/>
    </location>
</feature>
<feature type="disulfide bond" evidence="2">
    <location>
        <begin position="24"/>
        <end position="146"/>
    </location>
</feature>
<feature type="disulfide bond" evidence="2">
    <location>
        <begin position="48"/>
        <end position="134"/>
    </location>
</feature>
<feature type="disulfide bond" evidence="2">
    <location>
        <begin position="83"/>
        <end position="99"/>
    </location>
</feature>
<feature type="disulfide bond" evidence="2">
    <location>
        <begin position="95"/>
        <end position="113"/>
    </location>
</feature>
<organism>
    <name type="scientific">Hylobates lar</name>
    <name type="common">Lar gibbon</name>
    <name type="synonym">White-handed gibbon</name>
    <dbReference type="NCBI Taxonomy" id="9580"/>
    <lineage>
        <taxon>Eukaryota</taxon>
        <taxon>Metazoa</taxon>
        <taxon>Chordata</taxon>
        <taxon>Craniata</taxon>
        <taxon>Vertebrata</taxon>
        <taxon>Euteleostomi</taxon>
        <taxon>Mammalia</taxon>
        <taxon>Eutheria</taxon>
        <taxon>Euarchontoglires</taxon>
        <taxon>Primates</taxon>
        <taxon>Haplorrhini</taxon>
        <taxon>Catarrhini</taxon>
        <taxon>Hylobatidae</taxon>
        <taxon>Hylobates</taxon>
    </lineage>
</organism>
<gene>
    <name type="primary">LYZ</name>
    <name type="synonym">LZM</name>
</gene>